<reference key="1">
    <citation type="journal article" date="1998" name="Gene">
        <title>Analysis of pufferfish homologues of the AT-rich human APP gene.</title>
        <authorList>
            <person name="Villard L."/>
            <person name="Tassone F."/>
            <person name="Crnogorac-Jurcevic T."/>
            <person name="Clancy K."/>
            <person name="Gardiner K."/>
        </authorList>
    </citation>
    <scope>NUCLEOTIDE SEQUENCE [GENOMIC DNA]</scope>
</reference>
<feature type="signal peptide" evidence="3">
    <location>
        <begin position="1"/>
        <end position="18"/>
    </location>
</feature>
<feature type="chain" id="PRO_0000000197" description="Amyloid-beta A4 protein">
    <location>
        <begin position="19"/>
        <end position="737"/>
    </location>
</feature>
<feature type="chain" id="PRO_0000000198" description="Amyloid-beta protein" evidence="3">
    <location>
        <begin position="639"/>
        <end position="681"/>
    </location>
</feature>
<feature type="topological domain" description="Extracellular" evidence="3">
    <location>
        <begin position="19"/>
        <end position="668"/>
    </location>
</feature>
<feature type="transmembrane region" description="Helical" evidence="3">
    <location>
        <begin position="669"/>
        <end position="689"/>
    </location>
</feature>
<feature type="topological domain" description="Cytoplasmic" evidence="3">
    <location>
        <begin position="690"/>
        <end position="737"/>
    </location>
</feature>
<feature type="domain" description="E1" evidence="5">
    <location>
        <begin position="29"/>
        <end position="190"/>
    </location>
</feature>
<feature type="domain" description="BPTI/Kunitz inhibitor" evidence="4">
    <location>
        <begin position="286"/>
        <end position="344"/>
    </location>
</feature>
<feature type="domain" description="E2" evidence="6">
    <location>
        <begin position="354"/>
        <end position="545"/>
    </location>
</feature>
<feature type="region of interest" description="GFLD subdomain" evidence="5">
    <location>
        <begin position="29"/>
        <end position="124"/>
    </location>
</feature>
<feature type="region of interest" description="CuBD subdomain" evidence="5">
    <location>
        <begin position="132"/>
        <end position="190"/>
    </location>
</feature>
<feature type="region of interest" description="Disordered" evidence="7">
    <location>
        <begin position="193"/>
        <end position="280"/>
    </location>
</feature>
<feature type="region of interest" description="Clathrin-binding" evidence="1">
    <location>
        <begin position="726"/>
        <end position="729"/>
    </location>
</feature>
<feature type="short sequence motif" description="YENPXY motif" evidence="2">
    <location>
        <begin position="724"/>
        <end position="729"/>
    </location>
</feature>
<feature type="compositionally biased region" description="Acidic residues" evidence="7">
    <location>
        <begin position="193"/>
        <end position="207"/>
    </location>
</feature>
<feature type="compositionally biased region" description="Acidic residues" evidence="7">
    <location>
        <begin position="242"/>
        <end position="262"/>
    </location>
</feature>
<feature type="binding site" evidence="5">
    <location>
        <position position="148"/>
    </location>
    <ligand>
        <name>Cu cation</name>
        <dbReference type="ChEBI" id="CHEBI:23378"/>
    </ligand>
</feature>
<feature type="binding site" evidence="5">
    <location>
        <position position="152"/>
    </location>
    <ligand>
        <name>Cu cation</name>
        <dbReference type="ChEBI" id="CHEBI:23378"/>
    </ligand>
</feature>
<feature type="binding site" evidence="5">
    <location>
        <position position="169"/>
    </location>
    <ligand>
        <name>Cu cation</name>
        <dbReference type="ChEBI" id="CHEBI:23378"/>
    </ligand>
</feature>
<feature type="site" description="Required for Cu(2+) reduction" evidence="5">
    <location>
        <position position="171"/>
    </location>
</feature>
<feature type="site" description="Reactive bond">
    <location>
        <begin position="300"/>
        <end position="301"/>
    </location>
</feature>
<feature type="glycosylation site" description="N-linked (GlcNAc...) asparagine" evidence="3">
    <location>
        <position position="522"/>
    </location>
</feature>
<feature type="disulfide bond" evidence="5">
    <location>
        <begin position="39"/>
        <end position="63"/>
    </location>
</feature>
<feature type="disulfide bond" evidence="5">
    <location>
        <begin position="74"/>
        <end position="118"/>
    </location>
</feature>
<feature type="disulfide bond" evidence="5">
    <location>
        <begin position="99"/>
        <end position="106"/>
    </location>
</feature>
<feature type="disulfide bond" evidence="5">
    <location>
        <begin position="134"/>
        <end position="188"/>
    </location>
</feature>
<feature type="disulfide bond" evidence="5">
    <location>
        <begin position="145"/>
        <end position="175"/>
    </location>
</feature>
<feature type="disulfide bond" evidence="5">
    <location>
        <begin position="159"/>
        <end position="187"/>
    </location>
</feature>
<feature type="disulfide bond" evidence="4">
    <location>
        <begin position="290"/>
        <end position="340"/>
    </location>
</feature>
<feature type="disulfide bond" evidence="4">
    <location>
        <begin position="299"/>
        <end position="323"/>
    </location>
</feature>
<feature type="disulfide bond" evidence="4">
    <location>
        <begin position="315"/>
        <end position="336"/>
    </location>
</feature>
<sequence length="737" mass="82857">MGETTAFVLLLVATLTRSSEIPADDTVGLLTEPQVAMFCGKLNMHINVQNGKWESDPSGTKSCLNTKEGILQYCQEVYPELQITNVVEANQPVSIQNWCKKGRKQCRSHTHIVVPYRCLVGEFVSDALLVPDKCKFLHQERMNQCESHLHWHTVAKESCGDRSMNLHDYGMLLPCGIDRFRGVKFVCCPAETEQETDSSEVEGEESDVWWGGADPEYSENSPPTPSRATYVAGDAFERDENGDGDEDEEDDEDVDPTDEQESDERTANVAMTTTTTTTTESVEEVVRAVCWAQAESGPCRAMLERWYFNPKKRRCVPFLFGGCGGNRNNFESEEYCLAVCSSSLPTVAPSPPDAVDQYFEAPGDDNEHADFRKAKESLEAKHRERMSQVMREWEEAERQAKNLPRADKKAVIQHFQEKVEALEQEAAGERQQLVETHMARVEALLNSRRRLTLENYLGALQANPPRARQVLSLLKKYVRAEQKDRQHTLKHYEHVRTVDPKKAAQIRPQVLTHLRVIDERMNQSLALLYKVPSVASEIQNQIYPAAGSDCKDPVEHCVCPQVDGLVSYGNDALMPDQAYSSAPMDMGVDGLGSIDQSFNQANTENHVEPVDARPIPDRGLPTRPVSSLKLEEMPEVRTETDKRQSAGYEVYHQKLVFFADDVGSNKGAIIGLMVGGVVIATVIVITLVMLRKKQYTSIHHGVIEVDAAVTPEERHLARMQQNGYENPTYKFFEQMQN</sequence>
<dbReference type="EMBL" id="AF090120">
    <property type="protein sequence ID" value="AAD13392.1"/>
    <property type="molecule type" value="Genomic_DNA"/>
</dbReference>
<dbReference type="SMR" id="O93279"/>
<dbReference type="STRING" id="31033.ENSTRUP00000066300"/>
<dbReference type="GlyCosmos" id="O93279">
    <property type="glycosylation" value="1 site, No reported glycans"/>
</dbReference>
<dbReference type="eggNOG" id="KOG3540">
    <property type="taxonomic scope" value="Eukaryota"/>
</dbReference>
<dbReference type="InParanoid" id="O93279"/>
<dbReference type="Proteomes" id="UP000005226">
    <property type="component" value="Unplaced"/>
</dbReference>
<dbReference type="GO" id="GO:0009986">
    <property type="term" value="C:cell surface"/>
    <property type="evidence" value="ECO:0007669"/>
    <property type="project" value="TreeGrafter"/>
</dbReference>
<dbReference type="GO" id="GO:0005769">
    <property type="term" value="C:early endosome"/>
    <property type="evidence" value="ECO:0007669"/>
    <property type="project" value="TreeGrafter"/>
</dbReference>
<dbReference type="GO" id="GO:0005794">
    <property type="term" value="C:Golgi apparatus"/>
    <property type="evidence" value="ECO:0007669"/>
    <property type="project" value="TreeGrafter"/>
</dbReference>
<dbReference type="GO" id="GO:0005798">
    <property type="term" value="C:Golgi-associated vesicle"/>
    <property type="evidence" value="ECO:0000250"/>
    <property type="project" value="UniProtKB"/>
</dbReference>
<dbReference type="GO" id="GO:0045121">
    <property type="term" value="C:membrane raft"/>
    <property type="evidence" value="ECO:0007669"/>
    <property type="project" value="TreeGrafter"/>
</dbReference>
<dbReference type="GO" id="GO:0005886">
    <property type="term" value="C:plasma membrane"/>
    <property type="evidence" value="ECO:0007669"/>
    <property type="project" value="TreeGrafter"/>
</dbReference>
<dbReference type="GO" id="GO:0055037">
    <property type="term" value="C:recycling endosome"/>
    <property type="evidence" value="ECO:0000250"/>
    <property type="project" value="UniProtKB"/>
</dbReference>
<dbReference type="GO" id="GO:0008201">
    <property type="term" value="F:heparin binding"/>
    <property type="evidence" value="ECO:0007669"/>
    <property type="project" value="InterPro"/>
</dbReference>
<dbReference type="GO" id="GO:0004867">
    <property type="term" value="F:serine-type endopeptidase inhibitor activity"/>
    <property type="evidence" value="ECO:0007669"/>
    <property type="project" value="UniProtKB-KW"/>
</dbReference>
<dbReference type="GO" id="GO:0030546">
    <property type="term" value="F:signaling receptor activator activity"/>
    <property type="evidence" value="ECO:0007669"/>
    <property type="project" value="TreeGrafter"/>
</dbReference>
<dbReference type="GO" id="GO:0005102">
    <property type="term" value="F:signaling receptor binding"/>
    <property type="evidence" value="ECO:0007669"/>
    <property type="project" value="TreeGrafter"/>
</dbReference>
<dbReference type="GO" id="GO:0046914">
    <property type="term" value="F:transition metal ion binding"/>
    <property type="evidence" value="ECO:0007669"/>
    <property type="project" value="InterPro"/>
</dbReference>
<dbReference type="GO" id="GO:0007409">
    <property type="term" value="P:axonogenesis"/>
    <property type="evidence" value="ECO:0007669"/>
    <property type="project" value="TreeGrafter"/>
</dbReference>
<dbReference type="GO" id="GO:0007417">
    <property type="term" value="P:central nervous system development"/>
    <property type="evidence" value="ECO:0007669"/>
    <property type="project" value="TreeGrafter"/>
</dbReference>
<dbReference type="CDD" id="cd22607">
    <property type="entry name" value="Kunitz_ABPP-like"/>
    <property type="match status" value="1"/>
</dbReference>
<dbReference type="FunFam" id="3.30.1490.140:FF:000001">
    <property type="entry name" value="Amyloid beta (A4) protein b"/>
    <property type="match status" value="1"/>
</dbReference>
<dbReference type="FunFam" id="3.90.570.10:FF:000001">
    <property type="entry name" value="Amyloid beta A4 protein"/>
    <property type="match status" value="1"/>
</dbReference>
<dbReference type="FunFam" id="4.10.410.10:FF:000001">
    <property type="entry name" value="Amyloid beta A4 protein"/>
    <property type="match status" value="1"/>
</dbReference>
<dbReference type="FunFam" id="1.20.120.770:FF:000001">
    <property type="entry name" value="Amyloid beta A4 protein-like isoform 1"/>
    <property type="match status" value="1"/>
</dbReference>
<dbReference type="Gene3D" id="6.10.250.1670">
    <property type="match status" value="1"/>
</dbReference>
<dbReference type="Gene3D" id="1.20.120.770">
    <property type="entry name" value="Amyloid precursor protein, E2 domain"/>
    <property type="match status" value="1"/>
</dbReference>
<dbReference type="Gene3D" id="3.30.1490.140">
    <property type="entry name" value="Amyloidogenic glycoprotein, copper-binding domain"/>
    <property type="match status" value="1"/>
</dbReference>
<dbReference type="Gene3D" id="3.90.570.10">
    <property type="entry name" value="Amyloidogenic glycoprotein, heparin-binding domain"/>
    <property type="match status" value="1"/>
</dbReference>
<dbReference type="Gene3D" id="4.10.410.10">
    <property type="entry name" value="Pancreatic trypsin inhibitor Kunitz domain"/>
    <property type="match status" value="1"/>
</dbReference>
<dbReference type="Gene3D" id="2.30.29.30">
    <property type="entry name" value="Pleckstrin-homology domain (PH domain)/Phosphotyrosine-binding domain (PTB)"/>
    <property type="match status" value="1"/>
</dbReference>
<dbReference type="InterPro" id="IPR036669">
    <property type="entry name" value="Amyloid_Cu-bd_sf"/>
</dbReference>
<dbReference type="InterPro" id="IPR008155">
    <property type="entry name" value="Amyloid_glyco"/>
</dbReference>
<dbReference type="InterPro" id="IPR013803">
    <property type="entry name" value="Amyloid_glyco_Abeta"/>
</dbReference>
<dbReference type="InterPro" id="IPR011178">
    <property type="entry name" value="Amyloid_glyco_Cu-bd"/>
</dbReference>
<dbReference type="InterPro" id="IPR024329">
    <property type="entry name" value="Amyloid_glyco_E2_domain"/>
</dbReference>
<dbReference type="InterPro" id="IPR008154">
    <property type="entry name" value="Amyloid_glyco_extra"/>
</dbReference>
<dbReference type="InterPro" id="IPR015849">
    <property type="entry name" value="Amyloid_glyco_heparin-bd"/>
</dbReference>
<dbReference type="InterPro" id="IPR036454">
    <property type="entry name" value="Amyloid_glyco_heparin-bd_sf"/>
</dbReference>
<dbReference type="InterPro" id="IPR019745">
    <property type="entry name" value="Amyloid_glyco_intracell_CS"/>
</dbReference>
<dbReference type="InterPro" id="IPR019543">
    <property type="entry name" value="APP_amyloid_C"/>
</dbReference>
<dbReference type="InterPro" id="IPR019744">
    <property type="entry name" value="APP_CUBD_CS"/>
</dbReference>
<dbReference type="InterPro" id="IPR036176">
    <property type="entry name" value="E2_sf"/>
</dbReference>
<dbReference type="InterPro" id="IPR002223">
    <property type="entry name" value="Kunitz_BPTI"/>
</dbReference>
<dbReference type="InterPro" id="IPR036880">
    <property type="entry name" value="Kunitz_BPTI_sf"/>
</dbReference>
<dbReference type="InterPro" id="IPR011993">
    <property type="entry name" value="PH-like_dom_sf"/>
</dbReference>
<dbReference type="InterPro" id="IPR020901">
    <property type="entry name" value="Prtase_inh_Kunz-CS"/>
</dbReference>
<dbReference type="PANTHER" id="PTHR23103">
    <property type="entry name" value="ALZHEIMER'S DISEASE BETA-AMYLOID RELATED"/>
    <property type="match status" value="1"/>
</dbReference>
<dbReference type="PANTHER" id="PTHR23103:SF7">
    <property type="entry name" value="AMYLOID-BETA PRECURSOR PROTEIN"/>
    <property type="match status" value="1"/>
</dbReference>
<dbReference type="Pfam" id="PF10515">
    <property type="entry name" value="APP_amyloid"/>
    <property type="match status" value="1"/>
</dbReference>
<dbReference type="Pfam" id="PF12924">
    <property type="entry name" value="APP_Cu_bd"/>
    <property type="match status" value="1"/>
</dbReference>
<dbReference type="Pfam" id="PF12925">
    <property type="entry name" value="APP_E2"/>
    <property type="match status" value="1"/>
</dbReference>
<dbReference type="Pfam" id="PF02177">
    <property type="entry name" value="APP_N"/>
    <property type="match status" value="1"/>
</dbReference>
<dbReference type="Pfam" id="PF03494">
    <property type="entry name" value="Beta-APP"/>
    <property type="match status" value="1"/>
</dbReference>
<dbReference type="Pfam" id="PF00014">
    <property type="entry name" value="Kunitz_BPTI"/>
    <property type="match status" value="1"/>
</dbReference>
<dbReference type="PRINTS" id="PR00203">
    <property type="entry name" value="AMYLOIDA4"/>
</dbReference>
<dbReference type="PRINTS" id="PR00759">
    <property type="entry name" value="BASICPTASE"/>
</dbReference>
<dbReference type="PRINTS" id="PR00204">
    <property type="entry name" value="BETAAMYLOID"/>
</dbReference>
<dbReference type="SMART" id="SM00006">
    <property type="entry name" value="A4_EXTRA"/>
    <property type="match status" value="1"/>
</dbReference>
<dbReference type="SMART" id="SM00131">
    <property type="entry name" value="KU"/>
    <property type="match status" value="1"/>
</dbReference>
<dbReference type="SUPFAM" id="SSF56491">
    <property type="entry name" value="A heparin-binding domain"/>
    <property type="match status" value="1"/>
</dbReference>
<dbReference type="SUPFAM" id="SSF89811">
    <property type="entry name" value="Amyloid beta a4 protein copper binding domain (domain 2)"/>
    <property type="match status" value="1"/>
</dbReference>
<dbReference type="SUPFAM" id="SSF57362">
    <property type="entry name" value="BPTI-like"/>
    <property type="match status" value="1"/>
</dbReference>
<dbReference type="SUPFAM" id="SSF109843">
    <property type="entry name" value="CAPPD, an extracellular domain of amyloid beta A4 protein"/>
    <property type="match status" value="1"/>
</dbReference>
<dbReference type="PROSITE" id="PS00319">
    <property type="entry name" value="APP_CUBD"/>
    <property type="match status" value="1"/>
</dbReference>
<dbReference type="PROSITE" id="PS51869">
    <property type="entry name" value="APP_E1"/>
    <property type="match status" value="1"/>
</dbReference>
<dbReference type="PROSITE" id="PS51870">
    <property type="entry name" value="APP_E2"/>
    <property type="match status" value="1"/>
</dbReference>
<dbReference type="PROSITE" id="PS00320">
    <property type="entry name" value="APP_INTRA"/>
    <property type="match status" value="1"/>
</dbReference>
<dbReference type="PROSITE" id="PS00280">
    <property type="entry name" value="BPTI_KUNITZ_1"/>
    <property type="match status" value="1"/>
</dbReference>
<dbReference type="PROSITE" id="PS50279">
    <property type="entry name" value="BPTI_KUNITZ_2"/>
    <property type="match status" value="1"/>
</dbReference>
<keyword id="KW-0034">Amyloid</keyword>
<keyword id="KW-0186">Copper</keyword>
<keyword id="KW-1015">Disulfide bond</keyword>
<keyword id="KW-0325">Glycoprotein</keyword>
<keyword id="KW-0472">Membrane</keyword>
<keyword id="KW-0479">Metal-binding</keyword>
<keyword id="KW-0646">Protease inhibitor</keyword>
<keyword id="KW-1185">Reference proteome</keyword>
<keyword id="KW-0722">Serine protease inhibitor</keyword>
<keyword id="KW-0732">Signal</keyword>
<keyword id="KW-0812">Transmembrane</keyword>
<keyword id="KW-1133">Transmembrane helix</keyword>
<evidence type="ECO:0000250" key="1"/>
<evidence type="ECO:0000250" key="2">
    <source>
        <dbReference type="UniProtKB" id="P05067"/>
    </source>
</evidence>
<evidence type="ECO:0000255" key="3"/>
<evidence type="ECO:0000255" key="4">
    <source>
        <dbReference type="PROSITE-ProRule" id="PRU00031"/>
    </source>
</evidence>
<evidence type="ECO:0000255" key="5">
    <source>
        <dbReference type="PROSITE-ProRule" id="PRU01217"/>
    </source>
</evidence>
<evidence type="ECO:0000255" key="6">
    <source>
        <dbReference type="PROSITE-ProRule" id="PRU01218"/>
    </source>
</evidence>
<evidence type="ECO:0000256" key="7">
    <source>
        <dbReference type="SAM" id="MobiDB-lite"/>
    </source>
</evidence>
<evidence type="ECO:0000305" key="8"/>
<proteinExistence type="inferred from homology"/>
<accession>O93279</accession>
<organism>
    <name type="scientific">Takifugu rubripes</name>
    <name type="common">Japanese pufferfish</name>
    <name type="synonym">Fugu rubripes</name>
    <dbReference type="NCBI Taxonomy" id="31033"/>
    <lineage>
        <taxon>Eukaryota</taxon>
        <taxon>Metazoa</taxon>
        <taxon>Chordata</taxon>
        <taxon>Craniata</taxon>
        <taxon>Vertebrata</taxon>
        <taxon>Euteleostomi</taxon>
        <taxon>Actinopterygii</taxon>
        <taxon>Neopterygii</taxon>
        <taxon>Teleostei</taxon>
        <taxon>Neoteleostei</taxon>
        <taxon>Acanthomorphata</taxon>
        <taxon>Eupercaria</taxon>
        <taxon>Tetraodontiformes</taxon>
        <taxon>Tetradontoidea</taxon>
        <taxon>Tetraodontidae</taxon>
        <taxon>Takifugu</taxon>
    </lineage>
</organism>
<gene>
    <name type="primary">app</name>
</gene>
<name>A4_TAKRU</name>
<protein>
    <recommendedName>
        <fullName>Amyloid-beta A4 protein</fullName>
    </recommendedName>
    <alternativeName>
        <fullName>ABPP</fullName>
        <shortName>APP</shortName>
    </alternativeName>
    <alternativeName>
        <fullName>Alzheimer disease amyloid A4 protein homolog</fullName>
    </alternativeName>
    <alternativeName>
        <fullName evidence="8">Amyloid precursor protein</fullName>
    </alternativeName>
    <alternativeName>
        <fullName evidence="8">Amyloid-beta precursor protein</fullName>
    </alternativeName>
    <component>
        <recommendedName>
            <fullName>Amyloid-beta protein</fullName>
        </recommendedName>
        <alternativeName>
            <fullName>A-beta</fullName>
        </alternativeName>
        <alternativeName>
            <fullName>APP-beta</fullName>
        </alternativeName>
    </component>
</protein>
<comment type="function">
    <text evidence="1">Functional neuronal receptor which couples to intracellular signaling pathway through the GTP-binding protein G(O).</text>
</comment>
<comment type="subcellular location">
    <subcellularLocation>
        <location>Membrane</location>
        <topology>Single-pass type I membrane protein</topology>
    </subcellularLocation>
</comment>
<comment type="similarity">
    <text evidence="5">Belongs to the APP family.</text>
</comment>